<comment type="function">
    <text evidence="1 2">Adapter protein which non-covalently associates with activating receptors found on the surface of a variety of immune cells to mediate signaling and cell activation following ligand binding by the receptors (By similarity). TYROBP is tyrosine-phosphorylated in the ITAM domain following ligand binding by the associated receptors which leads to activation of additional tyrosine kinases and subsequent cell activation (By similarity). Also has an inhibitory role in some cells (By similarity). Non-covalently associates with activating receptors of the CD300 family to mediate cell activation (By similarity). Also mediates cell activation through association with activating receptors of the CD200R family (By similarity). Required for neutrophil activation mediated by integrin (By similarity). Required for the activation of myeloid cells mediated by the CLEC5A/MDL1 receptor (By similarity). Associates with natural killer (NK) cell receptors such as the KLRD1/KLRC2 heterodimer to mediate NK cell activation (By similarity). Associates with TREM1 to mediate activation of neutrophils and monocytes (By similarity). Associates with TREM2 on monocyte-derived dendritic cells to mediate up-regulation of chemokine receptor CCR7 and dendritic cell maturation and survival (By similarity). Association with TREM2 mediates cytokine-induced formation of multinucleated giant cells which are formed by the fusion of macrophages (By similarity). Stabilizes the TREM2 C-terminal fragment (TREM2-CTF) produced by TREM2 ectodomain shedding which suppresses the release of pro-inflammatory cytokines (By similarity). In microglia, required with TREM2 for phagocytosis of apoptotic neurons (By similarity). Required with ITGAM/CD11B in microglia to control production of microglial superoxide ions which promote the neuronal apoptosis that occurs during brain development (By similarity). Promotes pro-inflammatory responses in microglia following nerve injury which accelerates degeneration of injured neurons (By similarity). Positively regulates the expression of the IRAK3/IRAK-M kinase and IL10 production by liver dendritic cells and inhibits their T cell allosimulatory ability (By similarity). Negatively regulates B cell proliferation (By similarity). Required for CSF1-mediated osteoclast cytoskeletal organization (By similarity). Positively regulates multinucleation during osteoclast development (By similarity).</text>
</comment>
<comment type="subunit">
    <text evidence="1 2">Homodimer; disulfide-linked (By similarity). Homotrimer; disulfide-linked (By similarity). Homotetramer; disulfide-linked (By similarity). Homotrimers and homotetramers form when low levels of partner receptors are available and is competitive with assembly with interacting receptors (By similarity). They may represent alternative oligomerization states or may be intermediates in the receptor assembly process (By similarity). Binding of a metal cation aids in homooligomerization through coordination of the metal ion by the subunits of the oligomer (By similarity). Interacts with TREM1 (By similarity). Interacts with TREM2 (By similarity). Interacts with CLECSF5 (By similarity). Interacts with CD300LB and CD300C2 (By similarity). Interacts with CD300E (By similarity). Interacts (via ITAM domain) with SYK (via SH2 domains); activates SYK mediating neutrophils and macrophages integrin-mediated activation (By similarity). Interacts with KLRC2 (By similarity). Interacts with CD300H (By similarity). Interacts with KLRD1 (By similarity).</text>
</comment>
<comment type="subcellular location">
    <subcellularLocation>
        <location evidence="1">Cell membrane</location>
        <topology evidence="3">Single-pass type I membrane protein</topology>
    </subcellularLocation>
</comment>
<comment type="PTM">
    <text evidence="1">Following ligand binding by associated receptors, tyrosine phosphorylated in the ITAM domain which leads to activation of additional tyrosine kinases and subsequent cell activation.</text>
</comment>
<comment type="similarity">
    <text evidence="5">Belongs to the TYROBP family.</text>
</comment>
<dbReference type="EMBL" id="AF321611">
    <property type="protein sequence ID" value="AAL37224.1"/>
    <property type="molecule type" value="mRNA"/>
</dbReference>
<dbReference type="RefSeq" id="NP_001028039.1">
    <property type="nucleotide sequence ID" value="NM_001032867.1"/>
</dbReference>
<dbReference type="SMR" id="Q8WNQ8"/>
<dbReference type="FunCoup" id="Q8WNQ8">
    <property type="interactions" value="269"/>
</dbReference>
<dbReference type="STRING" id="9544.ENSMMUP00000074812"/>
<dbReference type="PaxDb" id="9544-ENSMMUP00000010492"/>
<dbReference type="GeneID" id="574207"/>
<dbReference type="KEGG" id="mcc:574207"/>
<dbReference type="CTD" id="7305"/>
<dbReference type="eggNOG" id="ENOG502SCVI">
    <property type="taxonomic scope" value="Eukaryota"/>
</dbReference>
<dbReference type="HOGENOM" id="CLU_141718_0_0_1"/>
<dbReference type="InParanoid" id="Q8WNQ8"/>
<dbReference type="OrthoDB" id="9901873at2759"/>
<dbReference type="TreeFam" id="TF336898"/>
<dbReference type="Proteomes" id="UP000006718">
    <property type="component" value="Unassembled WGS sequence"/>
</dbReference>
<dbReference type="GO" id="GO:0009986">
    <property type="term" value="C:cell surface"/>
    <property type="evidence" value="ECO:0000250"/>
    <property type="project" value="UniProtKB"/>
</dbReference>
<dbReference type="GO" id="GO:0005886">
    <property type="term" value="C:plasma membrane"/>
    <property type="evidence" value="ECO:0000250"/>
    <property type="project" value="UniProtKB"/>
</dbReference>
<dbReference type="GO" id="GO:0046872">
    <property type="term" value="F:metal ion binding"/>
    <property type="evidence" value="ECO:0007669"/>
    <property type="project" value="UniProtKB-KW"/>
</dbReference>
<dbReference type="GO" id="GO:0042803">
    <property type="term" value="F:protein homodimerization activity"/>
    <property type="evidence" value="ECO:0000250"/>
    <property type="project" value="UniProtKB"/>
</dbReference>
<dbReference type="GO" id="GO:0005102">
    <property type="term" value="F:signaling receptor binding"/>
    <property type="evidence" value="ECO:0000318"/>
    <property type="project" value="GO_Central"/>
</dbReference>
<dbReference type="GO" id="GO:0043277">
    <property type="term" value="P:apoptotic cell clearance"/>
    <property type="evidence" value="ECO:0000250"/>
    <property type="project" value="UniProtKB"/>
</dbReference>
<dbReference type="GO" id="GO:0002282">
    <property type="term" value="P:microglial cell activation involved in immune response"/>
    <property type="evidence" value="ECO:0000318"/>
    <property type="project" value="GO_Central"/>
</dbReference>
<dbReference type="GO" id="GO:0030889">
    <property type="term" value="P:negative regulation of B cell proliferation"/>
    <property type="evidence" value="ECO:0000318"/>
    <property type="project" value="GO_Central"/>
</dbReference>
<dbReference type="GO" id="GO:0032911">
    <property type="term" value="P:negative regulation of transforming growth factor beta1 production"/>
    <property type="evidence" value="ECO:0000318"/>
    <property type="project" value="GO_Central"/>
</dbReference>
<dbReference type="GO" id="GO:0002283">
    <property type="term" value="P:neutrophil activation involved in immune response"/>
    <property type="evidence" value="ECO:0000318"/>
    <property type="project" value="GO_Central"/>
</dbReference>
<dbReference type="GO" id="GO:0034241">
    <property type="term" value="P:positive regulation of macrophage fusion"/>
    <property type="evidence" value="ECO:0000318"/>
    <property type="project" value="GO_Central"/>
</dbReference>
<dbReference type="GO" id="GO:1904151">
    <property type="term" value="P:positive regulation of microglial cell mediated cytotoxicity"/>
    <property type="evidence" value="ECO:0000318"/>
    <property type="project" value="GO_Central"/>
</dbReference>
<dbReference type="GO" id="GO:0032816">
    <property type="term" value="P:positive regulation of natural killer cell activation"/>
    <property type="evidence" value="ECO:0000318"/>
    <property type="project" value="GO_Central"/>
</dbReference>
<dbReference type="GO" id="GO:0071526">
    <property type="term" value="P:semaphorin-plexin signaling pathway"/>
    <property type="evidence" value="ECO:0000250"/>
    <property type="project" value="UniProtKB"/>
</dbReference>
<dbReference type="GO" id="GO:0002223">
    <property type="term" value="P:stimulatory C-type lectin receptor signaling pathway"/>
    <property type="evidence" value="ECO:0000250"/>
    <property type="project" value="UniProtKB"/>
</dbReference>
<dbReference type="GO" id="GO:0002222">
    <property type="term" value="P:stimulatory killer cell immunoglobulin-like receptor signaling pathway"/>
    <property type="evidence" value="ECO:0000250"/>
    <property type="project" value="UniProtKB"/>
</dbReference>
<dbReference type="GO" id="GO:0002291">
    <property type="term" value="P:T cell activation via T cell receptor contact with antigen bound to MHC molecule on antigen presenting cell"/>
    <property type="evidence" value="ECO:0000250"/>
    <property type="project" value="UniProtKB"/>
</dbReference>
<dbReference type="FunFam" id="1.10.287.770:FF:000004">
    <property type="entry name" value="TYRO protein tyrosine kinase-binding protein"/>
    <property type="match status" value="1"/>
</dbReference>
<dbReference type="Gene3D" id="1.10.287.770">
    <property type="entry name" value="YojJ-like"/>
    <property type="match status" value="1"/>
</dbReference>
<dbReference type="InterPro" id="IPR026200">
    <property type="entry name" value="Tyrobp"/>
</dbReference>
<dbReference type="PANTHER" id="PTHR17554">
    <property type="entry name" value="TYRO PROTEIN TYROSINE KINASE-BINDING PROTEIN"/>
    <property type="match status" value="1"/>
</dbReference>
<dbReference type="PANTHER" id="PTHR17554:SF2">
    <property type="entry name" value="TYRO PROTEIN TYROSINE KINASE-BINDING PROTEIN"/>
    <property type="match status" value="1"/>
</dbReference>
<reference key="1">
    <citation type="submission" date="2000-11" db="EMBL/GenBank/DDBJ databases">
        <title>Identification of rhesus monkey DAP10 and DAP12.</title>
        <authorList>
            <person name="LaBonte M.L."/>
            <person name="Letvin N.L."/>
        </authorList>
    </citation>
    <scope>NUCLEOTIDE SEQUENCE [MRNA]</scope>
</reference>
<organism>
    <name type="scientific">Macaca mulatta</name>
    <name type="common">Rhesus macaque</name>
    <dbReference type="NCBI Taxonomy" id="9544"/>
    <lineage>
        <taxon>Eukaryota</taxon>
        <taxon>Metazoa</taxon>
        <taxon>Chordata</taxon>
        <taxon>Craniata</taxon>
        <taxon>Vertebrata</taxon>
        <taxon>Euteleostomi</taxon>
        <taxon>Mammalia</taxon>
        <taxon>Eutheria</taxon>
        <taxon>Euarchontoglires</taxon>
        <taxon>Primates</taxon>
        <taxon>Haplorrhini</taxon>
        <taxon>Catarrhini</taxon>
        <taxon>Cercopithecidae</taxon>
        <taxon>Cercopithecinae</taxon>
        <taxon>Macaca</taxon>
    </lineage>
</organism>
<accession>Q8WNQ8</accession>
<keyword id="KW-0106">Calcium</keyword>
<keyword id="KW-1003">Cell membrane</keyword>
<keyword id="KW-1015">Disulfide bond</keyword>
<keyword id="KW-0391">Immunity</keyword>
<keyword id="KW-0472">Membrane</keyword>
<keyword id="KW-0479">Metal-binding</keyword>
<keyword id="KW-0597">Phosphoprotein</keyword>
<keyword id="KW-1185">Reference proteome</keyword>
<keyword id="KW-0732">Signal</keyword>
<keyword id="KW-0812">Transmembrane</keyword>
<keyword id="KW-1133">Transmembrane helix</keyword>
<gene>
    <name evidence="1" type="primary">TYROBP</name>
    <name evidence="1" type="synonym">DAP12</name>
</gene>
<sequence>MGGLEPCSRLLLLPLLLAVGGLRPVQAQAQSDCSCSTVSPGVLAGIVLGDLVLTVLIALAVYFLGRLVPRGRGAAEAATRKQRITETESPYQELQGQRSDVYSDLNTQRPYYK</sequence>
<name>TYOBP_MACMU</name>
<evidence type="ECO:0000250" key="1">
    <source>
        <dbReference type="UniProtKB" id="O43914"/>
    </source>
</evidence>
<evidence type="ECO:0000250" key="2">
    <source>
        <dbReference type="UniProtKB" id="O54885"/>
    </source>
</evidence>
<evidence type="ECO:0000255" key="3"/>
<evidence type="ECO:0000256" key="4">
    <source>
        <dbReference type="SAM" id="MobiDB-lite"/>
    </source>
</evidence>
<evidence type="ECO:0000305" key="5"/>
<feature type="signal peptide" evidence="3">
    <location>
        <begin position="1"/>
        <end position="27"/>
    </location>
</feature>
<feature type="chain" id="PRO_0000022604" description="TYRO protein tyrosine kinase-binding protein">
    <location>
        <begin position="28"/>
        <end position="113"/>
    </location>
</feature>
<feature type="topological domain" description="Extracellular" evidence="1">
    <location>
        <begin position="28"/>
        <end position="40"/>
    </location>
</feature>
<feature type="transmembrane region" description="Helical" evidence="1">
    <location>
        <begin position="41"/>
        <end position="61"/>
    </location>
</feature>
<feature type="topological domain" description="Cytoplasmic" evidence="1">
    <location>
        <begin position="62"/>
        <end position="113"/>
    </location>
</feature>
<feature type="domain" description="ITAM">
    <location>
        <begin position="80"/>
        <end position="108"/>
    </location>
</feature>
<feature type="region of interest" description="Disordered" evidence="4">
    <location>
        <begin position="75"/>
        <end position="113"/>
    </location>
</feature>
<feature type="compositionally biased region" description="Polar residues" evidence="4">
    <location>
        <begin position="87"/>
        <end position="113"/>
    </location>
</feature>
<feature type="binding site" evidence="1">
    <location>
        <position position="50"/>
    </location>
    <ligand>
        <name>Ca(2+)</name>
        <dbReference type="ChEBI" id="CHEBI:29108"/>
        <note>ligand shared between two neighboring subunits in homooligomer</note>
    </ligand>
</feature>
<feature type="site" description="Important for interaction with transmembrane receptors" evidence="1">
    <location>
        <position position="54"/>
    </location>
</feature>
<feature type="modified residue" description="Phosphotyrosine" evidence="2">
    <location>
        <position position="91"/>
    </location>
</feature>
<feature type="modified residue" description="Phosphotyrosine" evidence="2">
    <location>
        <position position="102"/>
    </location>
</feature>
<feature type="disulfide bond" description="Interchain" evidence="1">
    <location>
        <position position="35"/>
    </location>
</feature>
<protein>
    <recommendedName>
        <fullName evidence="1">TYRO protein tyrosine kinase-binding protein</fullName>
    </recommendedName>
    <alternativeName>
        <fullName evidence="1">DNAX-activation protein 12</fullName>
    </alternativeName>
</protein>
<proteinExistence type="inferred from homology"/>